<organism>
    <name type="scientific">Paracoccidioides brasiliensis (strain Pb18)</name>
    <dbReference type="NCBI Taxonomy" id="502780"/>
    <lineage>
        <taxon>Eukaryota</taxon>
        <taxon>Fungi</taxon>
        <taxon>Dikarya</taxon>
        <taxon>Ascomycota</taxon>
        <taxon>Pezizomycotina</taxon>
        <taxon>Eurotiomycetes</taxon>
        <taxon>Eurotiomycetidae</taxon>
        <taxon>Onygenales</taxon>
        <taxon>Ajellomycetaceae</taxon>
        <taxon>Paracoccidioides</taxon>
    </lineage>
</organism>
<proteinExistence type="inferred from homology"/>
<reference key="1">
    <citation type="journal article" date="2011" name="PLoS Genet.">
        <title>Comparative genomic analysis of human fungal pathogens causing paracoccidioidomycosis.</title>
        <authorList>
            <person name="Desjardins C.A."/>
            <person name="Champion M.D."/>
            <person name="Holder J.W."/>
            <person name="Muszewska A."/>
            <person name="Goldberg J."/>
            <person name="Bailao A.M."/>
            <person name="Brigido M.M."/>
            <person name="Ferreira M.E."/>
            <person name="Garcia A.M."/>
            <person name="Grynberg M."/>
            <person name="Gujja S."/>
            <person name="Heiman D.I."/>
            <person name="Henn M.R."/>
            <person name="Kodira C.D."/>
            <person name="Leon-Narvaez H."/>
            <person name="Longo L.V.G."/>
            <person name="Ma L.-J."/>
            <person name="Malavazi I."/>
            <person name="Matsuo A.L."/>
            <person name="Morais F.V."/>
            <person name="Pereira M."/>
            <person name="Rodriguez-Brito S."/>
            <person name="Sakthikumar S."/>
            <person name="Salem-Izacc S.M."/>
            <person name="Sykes S.M."/>
            <person name="Teixeira M.M."/>
            <person name="Vallejo M.C."/>
            <person name="Walter M.E."/>
            <person name="Yandava C."/>
            <person name="Young S."/>
            <person name="Zeng Q."/>
            <person name="Zucker J."/>
            <person name="Felipe M.S."/>
            <person name="Goldman G.H."/>
            <person name="Haas B.J."/>
            <person name="McEwen J.G."/>
            <person name="Nino-Vega G."/>
            <person name="Puccia R."/>
            <person name="San-Blas G."/>
            <person name="Soares C.M."/>
            <person name="Birren B.W."/>
            <person name="Cuomo C.A."/>
        </authorList>
    </citation>
    <scope>NUCLEOTIDE SEQUENCE [LARGE SCALE GENOMIC DNA]</scope>
    <source>
        <strain>Pb18</strain>
    </source>
</reference>
<dbReference type="EMBL" id="KN275957">
    <property type="protein sequence ID" value="EEH44495.1"/>
    <property type="molecule type" value="Genomic_DNA"/>
</dbReference>
<dbReference type="RefSeq" id="XP_010756490.1">
    <property type="nucleotide sequence ID" value="XM_010758188.1"/>
</dbReference>
<dbReference type="SMR" id="C1G1P4"/>
<dbReference type="FunCoup" id="C1G1P4">
    <property type="interactions" value="1172"/>
</dbReference>
<dbReference type="STRING" id="502780.C1G1P4"/>
<dbReference type="GeneID" id="22580565"/>
<dbReference type="KEGG" id="pbn:PADG_00784"/>
<dbReference type="VEuPathDB" id="FungiDB:PADG_00784"/>
<dbReference type="eggNOG" id="KOG0830">
    <property type="taxonomic scope" value="Eukaryota"/>
</dbReference>
<dbReference type="HOGENOM" id="CLU_058171_0_1_1"/>
<dbReference type="InParanoid" id="C1G1P4"/>
<dbReference type="OMA" id="VKNFFEP"/>
<dbReference type="OrthoDB" id="36647at33183"/>
<dbReference type="Proteomes" id="UP000001628">
    <property type="component" value="Unassembled WGS sequence"/>
</dbReference>
<dbReference type="GO" id="GO:0022627">
    <property type="term" value="C:cytosolic small ribosomal subunit"/>
    <property type="evidence" value="ECO:0007669"/>
    <property type="project" value="UniProtKB-UniRule"/>
</dbReference>
<dbReference type="GO" id="GO:0003735">
    <property type="term" value="F:structural constituent of ribosome"/>
    <property type="evidence" value="ECO:0007669"/>
    <property type="project" value="UniProtKB-UniRule"/>
</dbReference>
<dbReference type="GO" id="GO:0000028">
    <property type="term" value="P:ribosomal small subunit assembly"/>
    <property type="evidence" value="ECO:0007669"/>
    <property type="project" value="UniProtKB-UniRule"/>
</dbReference>
<dbReference type="GO" id="GO:0006412">
    <property type="term" value="P:translation"/>
    <property type="evidence" value="ECO:0007669"/>
    <property type="project" value="UniProtKB-UniRule"/>
</dbReference>
<dbReference type="CDD" id="cd01425">
    <property type="entry name" value="RPS2"/>
    <property type="match status" value="1"/>
</dbReference>
<dbReference type="FunFam" id="3.40.50.10490:FF:000010">
    <property type="entry name" value="40S ribosomal protein S0"/>
    <property type="match status" value="1"/>
</dbReference>
<dbReference type="Gene3D" id="3.40.50.10490">
    <property type="entry name" value="Glucose-6-phosphate isomerase like protein, domain 1"/>
    <property type="match status" value="1"/>
</dbReference>
<dbReference type="HAMAP" id="MF_03015">
    <property type="entry name" value="Ribosomal_S2_euk"/>
    <property type="match status" value="1"/>
</dbReference>
<dbReference type="InterPro" id="IPR001865">
    <property type="entry name" value="Ribosomal_uS2"/>
</dbReference>
<dbReference type="InterPro" id="IPR032281">
    <property type="entry name" value="Ribosomal_uS2_C"/>
</dbReference>
<dbReference type="InterPro" id="IPR018130">
    <property type="entry name" value="Ribosomal_uS2_CS"/>
</dbReference>
<dbReference type="InterPro" id="IPR027498">
    <property type="entry name" value="Ribosomal_uS2_euk"/>
</dbReference>
<dbReference type="InterPro" id="IPR005707">
    <property type="entry name" value="Ribosomal_uS2_euk/arc"/>
</dbReference>
<dbReference type="InterPro" id="IPR023591">
    <property type="entry name" value="Ribosomal_uS2_flav_dom_sf"/>
</dbReference>
<dbReference type="NCBIfam" id="TIGR01012">
    <property type="entry name" value="uS2_euk_arch"/>
    <property type="match status" value="1"/>
</dbReference>
<dbReference type="PANTHER" id="PTHR11489">
    <property type="entry name" value="40S RIBOSOMAL PROTEIN SA"/>
    <property type="match status" value="1"/>
</dbReference>
<dbReference type="Pfam" id="PF16122">
    <property type="entry name" value="40S_SA_C"/>
    <property type="match status" value="1"/>
</dbReference>
<dbReference type="Pfam" id="PF00318">
    <property type="entry name" value="Ribosomal_S2"/>
    <property type="match status" value="2"/>
</dbReference>
<dbReference type="PRINTS" id="PR00395">
    <property type="entry name" value="RIBOSOMALS2"/>
</dbReference>
<dbReference type="SUPFAM" id="SSF52313">
    <property type="entry name" value="Ribosomal protein S2"/>
    <property type="match status" value="1"/>
</dbReference>
<dbReference type="PROSITE" id="PS00963">
    <property type="entry name" value="RIBOSOMAL_S2_2"/>
    <property type="match status" value="1"/>
</dbReference>
<evidence type="ECO:0000255" key="1">
    <source>
        <dbReference type="HAMAP-Rule" id="MF_03015"/>
    </source>
</evidence>
<evidence type="ECO:0000305" key="2"/>
<feature type="chain" id="PRO_0000389283" description="Small ribosomal subunit protein uS2">
    <location>
        <begin position="1"/>
        <end position="295"/>
    </location>
</feature>
<accession>C1G1P4</accession>
<keyword id="KW-0963">Cytoplasm</keyword>
<keyword id="KW-1185">Reference proteome</keyword>
<keyword id="KW-0687">Ribonucleoprotein</keyword>
<keyword id="KW-0689">Ribosomal protein</keyword>
<protein>
    <recommendedName>
        <fullName evidence="1">Small ribosomal subunit protein uS2</fullName>
    </recommendedName>
    <alternativeName>
        <fullName evidence="2">40S ribosomal protein S0</fullName>
    </alternativeName>
</protein>
<sequence>MAPSNLPPVFNATSQDIEMLLAAQCHLGSKNLQVHMEPYLWKTRPDGINVINIGKTWEKIVLAARIIAAIDNPADICVISARPYGQRAVLKFAAHTGAVAIAGRFTPGNFTNYITRSFKEPRLIIVTDPRTDSQAIKEASYVNIPVIALCDTDSPTEFVDVAIPTNNKGRHAIGLIWWMLAREVLRLRGTLANRETEWDVVVDLYFYRDPEAEENKEIEETKVPGAEEVGAAAIESGLVGDSWQAQATPGFSAGVAVPGTAVPGWEADVSTDWAASSAPAAETLADPAADPSVKW</sequence>
<gene>
    <name evidence="1" type="primary">RPS0</name>
    <name type="ORF">PADG_00784</name>
</gene>
<name>RSSA_PARBD</name>
<comment type="function">
    <text evidence="1">Required for the assembly and/or stability of the 40S ribosomal subunit. Required for the processing of the 20S rRNA-precursor to mature 18S rRNA in a late step of the maturation of 40S ribosomal subunits.</text>
</comment>
<comment type="subunit">
    <text evidence="1">Component of the small ribosomal subunit. Mature ribosomes consist of a small (40S) and a large (60S) subunit. The 40S subunit contains about 33 different proteins and 1 molecule of RNA (18S). The 60S subunit contains about 49 different proteins and 3 molecules of RNA (25S, 5.8S and 5S). Interacts with RPS21.</text>
</comment>
<comment type="subcellular location">
    <subcellularLocation>
        <location evidence="1">Cytoplasm</location>
    </subcellularLocation>
</comment>
<comment type="similarity">
    <text evidence="1">Belongs to the universal ribosomal protein uS2 family.</text>
</comment>